<keyword id="KW-0143">Chaperone</keyword>
<protein>
    <recommendedName>
        <fullName evidence="1">Co-chaperone protein HscB homolog</fullName>
    </recommendedName>
</protein>
<dbReference type="EMBL" id="CP001139">
    <property type="protein sequence ID" value="ACH66665.1"/>
    <property type="molecule type" value="Genomic_DNA"/>
</dbReference>
<dbReference type="RefSeq" id="WP_011261361.1">
    <property type="nucleotide sequence ID" value="NC_011184.1"/>
</dbReference>
<dbReference type="SMR" id="B5FAW3"/>
<dbReference type="GeneID" id="54163273"/>
<dbReference type="KEGG" id="vfm:VFMJ11_0634"/>
<dbReference type="HOGENOM" id="CLU_068529_2_0_6"/>
<dbReference type="Proteomes" id="UP000001857">
    <property type="component" value="Chromosome I"/>
</dbReference>
<dbReference type="GO" id="GO:1990230">
    <property type="term" value="C:iron-sulfur cluster transfer complex"/>
    <property type="evidence" value="ECO:0007669"/>
    <property type="project" value="TreeGrafter"/>
</dbReference>
<dbReference type="GO" id="GO:0001671">
    <property type="term" value="F:ATPase activator activity"/>
    <property type="evidence" value="ECO:0007669"/>
    <property type="project" value="InterPro"/>
</dbReference>
<dbReference type="GO" id="GO:0051087">
    <property type="term" value="F:protein-folding chaperone binding"/>
    <property type="evidence" value="ECO:0007669"/>
    <property type="project" value="InterPro"/>
</dbReference>
<dbReference type="GO" id="GO:0044571">
    <property type="term" value="P:[2Fe-2S] cluster assembly"/>
    <property type="evidence" value="ECO:0007669"/>
    <property type="project" value="InterPro"/>
</dbReference>
<dbReference type="GO" id="GO:0051259">
    <property type="term" value="P:protein complex oligomerization"/>
    <property type="evidence" value="ECO:0007669"/>
    <property type="project" value="InterPro"/>
</dbReference>
<dbReference type="GO" id="GO:0006457">
    <property type="term" value="P:protein folding"/>
    <property type="evidence" value="ECO:0007669"/>
    <property type="project" value="UniProtKB-UniRule"/>
</dbReference>
<dbReference type="CDD" id="cd06257">
    <property type="entry name" value="DnaJ"/>
    <property type="match status" value="1"/>
</dbReference>
<dbReference type="Gene3D" id="1.10.287.110">
    <property type="entry name" value="DnaJ domain"/>
    <property type="match status" value="1"/>
</dbReference>
<dbReference type="Gene3D" id="1.20.1280.20">
    <property type="entry name" value="HscB, C-terminal domain"/>
    <property type="match status" value="1"/>
</dbReference>
<dbReference type="HAMAP" id="MF_00682">
    <property type="entry name" value="HscB"/>
    <property type="match status" value="1"/>
</dbReference>
<dbReference type="InterPro" id="IPR001623">
    <property type="entry name" value="DnaJ_domain"/>
</dbReference>
<dbReference type="InterPro" id="IPR004640">
    <property type="entry name" value="HscB"/>
</dbReference>
<dbReference type="InterPro" id="IPR036386">
    <property type="entry name" value="HscB_C_sf"/>
</dbReference>
<dbReference type="InterPro" id="IPR009073">
    <property type="entry name" value="HscB_oligo_C"/>
</dbReference>
<dbReference type="InterPro" id="IPR036869">
    <property type="entry name" value="J_dom_sf"/>
</dbReference>
<dbReference type="NCBIfam" id="TIGR00714">
    <property type="entry name" value="hscB"/>
    <property type="match status" value="1"/>
</dbReference>
<dbReference type="NCBIfam" id="NF003449">
    <property type="entry name" value="PRK05014.1"/>
    <property type="match status" value="1"/>
</dbReference>
<dbReference type="PANTHER" id="PTHR14021">
    <property type="entry name" value="IRON-SULFUR CLUSTER CO-CHAPERONE PROTEIN HSCB"/>
    <property type="match status" value="1"/>
</dbReference>
<dbReference type="PANTHER" id="PTHR14021:SF15">
    <property type="entry name" value="IRON-SULFUR CLUSTER CO-CHAPERONE PROTEIN HSCB"/>
    <property type="match status" value="1"/>
</dbReference>
<dbReference type="Pfam" id="PF07743">
    <property type="entry name" value="HSCB_C"/>
    <property type="match status" value="1"/>
</dbReference>
<dbReference type="SMART" id="SM00271">
    <property type="entry name" value="DnaJ"/>
    <property type="match status" value="1"/>
</dbReference>
<dbReference type="SUPFAM" id="SSF46565">
    <property type="entry name" value="Chaperone J-domain"/>
    <property type="match status" value="1"/>
</dbReference>
<dbReference type="SUPFAM" id="SSF47144">
    <property type="entry name" value="HSC20 (HSCB), C-terminal oligomerisation domain"/>
    <property type="match status" value="1"/>
</dbReference>
<dbReference type="PROSITE" id="PS50076">
    <property type="entry name" value="DNAJ_2"/>
    <property type="match status" value="1"/>
</dbReference>
<gene>
    <name evidence="1" type="primary">hscB</name>
    <name type="ordered locus">VFMJ11_0634</name>
</gene>
<feature type="chain" id="PRO_1000131758" description="Co-chaperone protein HscB homolog">
    <location>
        <begin position="1"/>
        <end position="171"/>
    </location>
</feature>
<feature type="domain" description="J" evidence="1">
    <location>
        <begin position="2"/>
        <end position="74"/>
    </location>
</feature>
<evidence type="ECO:0000255" key="1">
    <source>
        <dbReference type="HAMAP-Rule" id="MF_00682"/>
    </source>
</evidence>
<proteinExistence type="inferred from homology"/>
<organism>
    <name type="scientific">Aliivibrio fischeri (strain MJ11)</name>
    <name type="common">Vibrio fischeri</name>
    <dbReference type="NCBI Taxonomy" id="388396"/>
    <lineage>
        <taxon>Bacteria</taxon>
        <taxon>Pseudomonadati</taxon>
        <taxon>Pseudomonadota</taxon>
        <taxon>Gammaproteobacteria</taxon>
        <taxon>Vibrionales</taxon>
        <taxon>Vibrionaceae</taxon>
        <taxon>Aliivibrio</taxon>
    </lineage>
</organism>
<comment type="function">
    <text evidence="1">Co-chaperone involved in the maturation of iron-sulfur cluster-containing proteins. Seems to help targeting proteins to be folded toward HscA.</text>
</comment>
<comment type="subunit">
    <text evidence="1">Interacts with HscA and stimulates its ATPase activity.</text>
</comment>
<comment type="similarity">
    <text evidence="1">Belongs to the HscB family.</text>
</comment>
<sequence length="171" mass="19831">MNHFELFGLPNQFELDGGLLSLQFRELQKRFHPDNFATSSERDRLLSIQKAAQINDAYQTLKNPVSRAEYILSEQGHDIRGEQTTMQDPMFLMQQMELREELESLPSSSDPESALFDFAENVTAMRKSQLVQLQELLKNEAWIEAAQSVRKLKFIEKLNQEVEQLEEKLLG</sequence>
<name>HSCB_ALIFM</name>
<reference key="1">
    <citation type="submission" date="2008-08" db="EMBL/GenBank/DDBJ databases">
        <title>Complete sequence of Vibrio fischeri strain MJ11.</title>
        <authorList>
            <person name="Mandel M.J."/>
            <person name="Stabb E.V."/>
            <person name="Ruby E.G."/>
            <person name="Ferriera S."/>
            <person name="Johnson J."/>
            <person name="Kravitz S."/>
            <person name="Beeson K."/>
            <person name="Sutton G."/>
            <person name="Rogers Y.-H."/>
            <person name="Friedman R."/>
            <person name="Frazier M."/>
            <person name="Venter J.C."/>
        </authorList>
    </citation>
    <scope>NUCLEOTIDE SEQUENCE [LARGE SCALE GENOMIC DNA]</scope>
    <source>
        <strain>MJ11</strain>
    </source>
</reference>
<accession>B5FAW3</accession>